<evidence type="ECO:0000255" key="1">
    <source>
        <dbReference type="HAMAP-Rule" id="MF_00045"/>
    </source>
</evidence>
<dbReference type="EC" id="3.1.15.-" evidence="1"/>
<dbReference type="EMBL" id="CP000712">
    <property type="protein sequence ID" value="ABQ80898.1"/>
    <property type="molecule type" value="Genomic_DNA"/>
</dbReference>
<dbReference type="SMR" id="A5W9T8"/>
<dbReference type="KEGG" id="ppf:Pput_4778"/>
<dbReference type="eggNOG" id="COG1949">
    <property type="taxonomic scope" value="Bacteria"/>
</dbReference>
<dbReference type="HOGENOM" id="CLU_064761_2_0_6"/>
<dbReference type="GO" id="GO:0005737">
    <property type="term" value="C:cytoplasm"/>
    <property type="evidence" value="ECO:0007669"/>
    <property type="project" value="UniProtKB-SubCell"/>
</dbReference>
<dbReference type="GO" id="GO:0000175">
    <property type="term" value="F:3'-5'-RNA exonuclease activity"/>
    <property type="evidence" value="ECO:0007669"/>
    <property type="project" value="InterPro"/>
</dbReference>
<dbReference type="GO" id="GO:0003676">
    <property type="term" value="F:nucleic acid binding"/>
    <property type="evidence" value="ECO:0007669"/>
    <property type="project" value="InterPro"/>
</dbReference>
<dbReference type="GO" id="GO:0006259">
    <property type="term" value="P:DNA metabolic process"/>
    <property type="evidence" value="ECO:0007669"/>
    <property type="project" value="UniProtKB-ARBA"/>
</dbReference>
<dbReference type="CDD" id="cd06135">
    <property type="entry name" value="Orn"/>
    <property type="match status" value="1"/>
</dbReference>
<dbReference type="FunFam" id="3.30.420.10:FF:000003">
    <property type="entry name" value="Oligoribonuclease"/>
    <property type="match status" value="1"/>
</dbReference>
<dbReference type="Gene3D" id="3.30.420.10">
    <property type="entry name" value="Ribonuclease H-like superfamily/Ribonuclease H"/>
    <property type="match status" value="1"/>
</dbReference>
<dbReference type="HAMAP" id="MF_00045">
    <property type="entry name" value="Oligoribonuclease"/>
    <property type="match status" value="1"/>
</dbReference>
<dbReference type="InterPro" id="IPR013520">
    <property type="entry name" value="Exonuclease_RNaseT/DNA_pol3"/>
</dbReference>
<dbReference type="InterPro" id="IPR022894">
    <property type="entry name" value="Oligoribonuclease"/>
</dbReference>
<dbReference type="InterPro" id="IPR012337">
    <property type="entry name" value="RNaseH-like_sf"/>
</dbReference>
<dbReference type="InterPro" id="IPR036397">
    <property type="entry name" value="RNaseH_sf"/>
</dbReference>
<dbReference type="NCBIfam" id="NF003765">
    <property type="entry name" value="PRK05359.1"/>
    <property type="match status" value="1"/>
</dbReference>
<dbReference type="PANTHER" id="PTHR11046">
    <property type="entry name" value="OLIGORIBONUCLEASE, MITOCHONDRIAL"/>
    <property type="match status" value="1"/>
</dbReference>
<dbReference type="PANTHER" id="PTHR11046:SF0">
    <property type="entry name" value="OLIGORIBONUCLEASE, MITOCHONDRIAL"/>
    <property type="match status" value="1"/>
</dbReference>
<dbReference type="Pfam" id="PF00929">
    <property type="entry name" value="RNase_T"/>
    <property type="match status" value="1"/>
</dbReference>
<dbReference type="SMART" id="SM00479">
    <property type="entry name" value="EXOIII"/>
    <property type="match status" value="1"/>
</dbReference>
<dbReference type="SUPFAM" id="SSF53098">
    <property type="entry name" value="Ribonuclease H-like"/>
    <property type="match status" value="1"/>
</dbReference>
<protein>
    <recommendedName>
        <fullName evidence="1">Oligoribonuclease</fullName>
        <ecNumber evidence="1">3.1.15.-</ecNumber>
    </recommendedName>
</protein>
<gene>
    <name evidence="1" type="primary">orn</name>
    <name type="ordered locus">Pput_4778</name>
</gene>
<comment type="function">
    <text evidence="1">3'-to-5' exoribonuclease specific for small oligoribonucleotides.</text>
</comment>
<comment type="subcellular location">
    <subcellularLocation>
        <location evidence="1">Cytoplasm</location>
    </subcellularLocation>
</comment>
<comment type="similarity">
    <text evidence="1">Belongs to the oligoribonuclease family.</text>
</comment>
<reference key="1">
    <citation type="submission" date="2007-05" db="EMBL/GenBank/DDBJ databases">
        <title>Complete sequence of Pseudomonas putida F1.</title>
        <authorList>
            <consortium name="US DOE Joint Genome Institute"/>
            <person name="Copeland A."/>
            <person name="Lucas S."/>
            <person name="Lapidus A."/>
            <person name="Barry K."/>
            <person name="Detter J.C."/>
            <person name="Glavina del Rio T."/>
            <person name="Hammon N."/>
            <person name="Israni S."/>
            <person name="Dalin E."/>
            <person name="Tice H."/>
            <person name="Pitluck S."/>
            <person name="Chain P."/>
            <person name="Malfatti S."/>
            <person name="Shin M."/>
            <person name="Vergez L."/>
            <person name="Schmutz J."/>
            <person name="Larimer F."/>
            <person name="Land M."/>
            <person name="Hauser L."/>
            <person name="Kyrpides N."/>
            <person name="Lykidis A."/>
            <person name="Parales R."/>
            <person name="Richardson P."/>
        </authorList>
    </citation>
    <scope>NUCLEOTIDE SEQUENCE [LARGE SCALE GENOMIC DNA]</scope>
    <source>
        <strain>ATCC 700007 / DSM 6899 / JCM 31910 / BCRC 17059 / LMG 24140 / F1</strain>
    </source>
</reference>
<proteinExistence type="inferred from homology"/>
<name>ORN_PSEP1</name>
<sequence>MQNPQNLIWIDLEMTGLDPDSDVIIEMATIVTDSELNTLAEGPVIAIHHSDEVLARMDEWNTRTHGASGLTQRVRESKVSMAEAEAQTIAFLEQWVPKGKSPICGNSICQDRRFLYRHMRNLENYFHYRNLDVSTLKELAARWAPDVRDSFKKGNTHLALDDIRESIAELRHYREHFIKL</sequence>
<accession>A5W9T8</accession>
<feature type="chain" id="PRO_1000004276" description="Oligoribonuclease">
    <location>
        <begin position="1"/>
        <end position="180"/>
    </location>
</feature>
<feature type="domain" description="Exonuclease" evidence="1">
    <location>
        <begin position="7"/>
        <end position="170"/>
    </location>
</feature>
<feature type="active site" evidence="1">
    <location>
        <position position="128"/>
    </location>
</feature>
<keyword id="KW-0963">Cytoplasm</keyword>
<keyword id="KW-0269">Exonuclease</keyword>
<keyword id="KW-0378">Hydrolase</keyword>
<keyword id="KW-0540">Nuclease</keyword>
<organism>
    <name type="scientific">Pseudomonas putida (strain ATCC 700007 / DSM 6899 / JCM 31910 / BCRC 17059 / LMG 24140 / F1)</name>
    <dbReference type="NCBI Taxonomy" id="351746"/>
    <lineage>
        <taxon>Bacteria</taxon>
        <taxon>Pseudomonadati</taxon>
        <taxon>Pseudomonadota</taxon>
        <taxon>Gammaproteobacteria</taxon>
        <taxon>Pseudomonadales</taxon>
        <taxon>Pseudomonadaceae</taxon>
        <taxon>Pseudomonas</taxon>
    </lineage>
</organism>